<accession>B5ZYN2</accession>
<evidence type="ECO:0000255" key="1">
    <source>
        <dbReference type="HAMAP-Rule" id="MF_01570"/>
    </source>
</evidence>
<feature type="chain" id="PRO_1000199457" description="Proline--tRNA ligase">
    <location>
        <begin position="1"/>
        <end position="440"/>
    </location>
</feature>
<organism>
    <name type="scientific">Rhizobium leguminosarum bv. trifolii (strain WSM2304)</name>
    <dbReference type="NCBI Taxonomy" id="395492"/>
    <lineage>
        <taxon>Bacteria</taxon>
        <taxon>Pseudomonadati</taxon>
        <taxon>Pseudomonadota</taxon>
        <taxon>Alphaproteobacteria</taxon>
        <taxon>Hyphomicrobiales</taxon>
        <taxon>Rhizobiaceae</taxon>
        <taxon>Rhizobium/Agrobacterium group</taxon>
        <taxon>Rhizobium</taxon>
    </lineage>
</organism>
<reference key="1">
    <citation type="journal article" date="2010" name="Stand. Genomic Sci.">
        <title>Complete genome sequence of Rhizobium leguminosarum bv trifolii strain WSM2304, an effective microsymbiont of the South American clover Trifolium polymorphum.</title>
        <authorList>
            <person name="Reeve W."/>
            <person name="O'Hara G."/>
            <person name="Chain P."/>
            <person name="Ardley J."/>
            <person name="Brau L."/>
            <person name="Nandesena K."/>
            <person name="Tiwari R."/>
            <person name="Malfatti S."/>
            <person name="Kiss H."/>
            <person name="Lapidus A."/>
            <person name="Copeland A."/>
            <person name="Nolan M."/>
            <person name="Land M."/>
            <person name="Ivanova N."/>
            <person name="Mavromatis K."/>
            <person name="Markowitz V."/>
            <person name="Kyrpides N."/>
            <person name="Melino V."/>
            <person name="Denton M."/>
            <person name="Yates R."/>
            <person name="Howieson J."/>
        </authorList>
    </citation>
    <scope>NUCLEOTIDE SEQUENCE [LARGE SCALE GENOMIC DNA]</scope>
    <source>
        <strain>WSM2304</strain>
    </source>
</reference>
<name>SYP_RHILW</name>
<dbReference type="EC" id="6.1.1.15" evidence="1"/>
<dbReference type="EMBL" id="CP001191">
    <property type="protein sequence ID" value="ACI54573.1"/>
    <property type="molecule type" value="Genomic_DNA"/>
</dbReference>
<dbReference type="RefSeq" id="WP_003587259.1">
    <property type="nucleotide sequence ID" value="NC_011369.1"/>
</dbReference>
<dbReference type="SMR" id="B5ZYN2"/>
<dbReference type="STRING" id="395492.Rleg2_1279"/>
<dbReference type="KEGG" id="rlt:Rleg2_1279"/>
<dbReference type="eggNOG" id="COG0442">
    <property type="taxonomic scope" value="Bacteria"/>
</dbReference>
<dbReference type="HOGENOM" id="CLU_016739_4_2_5"/>
<dbReference type="Proteomes" id="UP000008330">
    <property type="component" value="Chromosome"/>
</dbReference>
<dbReference type="GO" id="GO:0005829">
    <property type="term" value="C:cytosol"/>
    <property type="evidence" value="ECO:0007669"/>
    <property type="project" value="TreeGrafter"/>
</dbReference>
<dbReference type="GO" id="GO:0005524">
    <property type="term" value="F:ATP binding"/>
    <property type="evidence" value="ECO:0007669"/>
    <property type="project" value="UniProtKB-UniRule"/>
</dbReference>
<dbReference type="GO" id="GO:0004827">
    <property type="term" value="F:proline-tRNA ligase activity"/>
    <property type="evidence" value="ECO:0007669"/>
    <property type="project" value="UniProtKB-UniRule"/>
</dbReference>
<dbReference type="GO" id="GO:0006433">
    <property type="term" value="P:prolyl-tRNA aminoacylation"/>
    <property type="evidence" value="ECO:0007669"/>
    <property type="project" value="UniProtKB-UniRule"/>
</dbReference>
<dbReference type="CDD" id="cd00861">
    <property type="entry name" value="ProRS_anticodon_short"/>
    <property type="match status" value="1"/>
</dbReference>
<dbReference type="CDD" id="cd00779">
    <property type="entry name" value="ProRS_core_prok"/>
    <property type="match status" value="1"/>
</dbReference>
<dbReference type="FunFam" id="3.30.930.10:FF:000042">
    <property type="entry name" value="probable proline--tRNA ligase, mitochondrial"/>
    <property type="match status" value="1"/>
</dbReference>
<dbReference type="FunFam" id="3.40.50.800:FF:000032">
    <property type="entry name" value="Proline--tRNA ligase"/>
    <property type="match status" value="1"/>
</dbReference>
<dbReference type="Gene3D" id="3.40.50.800">
    <property type="entry name" value="Anticodon-binding domain"/>
    <property type="match status" value="1"/>
</dbReference>
<dbReference type="Gene3D" id="3.30.930.10">
    <property type="entry name" value="Bira Bifunctional Protein, Domain 2"/>
    <property type="match status" value="1"/>
</dbReference>
<dbReference type="HAMAP" id="MF_01570">
    <property type="entry name" value="Pro_tRNA_synth_type2"/>
    <property type="match status" value="1"/>
</dbReference>
<dbReference type="InterPro" id="IPR002314">
    <property type="entry name" value="aa-tRNA-synt_IIb"/>
</dbReference>
<dbReference type="InterPro" id="IPR006195">
    <property type="entry name" value="aa-tRNA-synth_II"/>
</dbReference>
<dbReference type="InterPro" id="IPR045864">
    <property type="entry name" value="aa-tRNA-synth_II/BPL/LPL"/>
</dbReference>
<dbReference type="InterPro" id="IPR004154">
    <property type="entry name" value="Anticodon-bd"/>
</dbReference>
<dbReference type="InterPro" id="IPR036621">
    <property type="entry name" value="Anticodon-bd_dom_sf"/>
</dbReference>
<dbReference type="InterPro" id="IPR002316">
    <property type="entry name" value="Pro-tRNA-ligase_IIa"/>
</dbReference>
<dbReference type="InterPro" id="IPR004500">
    <property type="entry name" value="Pro-tRNA-synth_IIa_bac-type"/>
</dbReference>
<dbReference type="InterPro" id="IPR050062">
    <property type="entry name" value="Pro-tRNA_synthetase"/>
</dbReference>
<dbReference type="InterPro" id="IPR023716">
    <property type="entry name" value="Prolyl-tRNA_ligase_IIa_type2"/>
</dbReference>
<dbReference type="InterPro" id="IPR044140">
    <property type="entry name" value="ProRS_anticodon_short"/>
</dbReference>
<dbReference type="InterPro" id="IPR033730">
    <property type="entry name" value="ProRS_core_prok"/>
</dbReference>
<dbReference type="NCBIfam" id="NF008979">
    <property type="entry name" value="PRK12325.1"/>
    <property type="match status" value="1"/>
</dbReference>
<dbReference type="NCBIfam" id="TIGR00409">
    <property type="entry name" value="proS_fam_II"/>
    <property type="match status" value="1"/>
</dbReference>
<dbReference type="PANTHER" id="PTHR42753">
    <property type="entry name" value="MITOCHONDRIAL RIBOSOME PROTEIN L39/PROLYL-TRNA LIGASE FAMILY MEMBER"/>
    <property type="match status" value="1"/>
</dbReference>
<dbReference type="PANTHER" id="PTHR42753:SF2">
    <property type="entry name" value="PROLINE--TRNA LIGASE"/>
    <property type="match status" value="1"/>
</dbReference>
<dbReference type="Pfam" id="PF03129">
    <property type="entry name" value="HGTP_anticodon"/>
    <property type="match status" value="1"/>
</dbReference>
<dbReference type="Pfam" id="PF00587">
    <property type="entry name" value="tRNA-synt_2b"/>
    <property type="match status" value="1"/>
</dbReference>
<dbReference type="PRINTS" id="PR01046">
    <property type="entry name" value="TRNASYNTHPRO"/>
</dbReference>
<dbReference type="SUPFAM" id="SSF52954">
    <property type="entry name" value="Class II aaRS ABD-related"/>
    <property type="match status" value="1"/>
</dbReference>
<dbReference type="SUPFAM" id="SSF55681">
    <property type="entry name" value="Class II aaRS and biotin synthetases"/>
    <property type="match status" value="1"/>
</dbReference>
<dbReference type="PROSITE" id="PS50862">
    <property type="entry name" value="AA_TRNA_LIGASE_II"/>
    <property type="match status" value="1"/>
</dbReference>
<protein>
    <recommendedName>
        <fullName evidence="1">Proline--tRNA ligase</fullName>
        <ecNumber evidence="1">6.1.1.15</ecNumber>
    </recommendedName>
    <alternativeName>
        <fullName evidence="1">Prolyl-tRNA synthetase</fullName>
        <shortName evidence="1">ProRS</shortName>
    </alternativeName>
</protein>
<proteinExistence type="inferred from homology"/>
<sequence>MRLSRYFMPILKENPKEAEIVSHRLMLRAGMIRQQSQGIYSWLPLGKRVLDKVNAIIRDEQNRAGAIELSMPTLQSAELWQESGRYDAYGKEMLRIKDRQDRPMLYGPTNEEMVTDIFRSSVKSYKDLPLNLYHIQLKFRDEIRPRFGTMRSREFMMKDAYSFDLTREGAEHSYNKMFAAYLRTFDRLGLRAIPMRADTGPIGGNLSHEFIILADTGESEVFCHKDFVGFDIPDDRTDFDSVDGLKAIFDKWTSLYAATSEMHDEAAFNAVPEGDRLSARGIEVGHIFYFGTKYSEAMGAKVQGPDGKEHFVHMGSYGIGPTRLVPAIIEASHDDNGIIWPASVAPFDIVVINMKAGDQACDDTCELIYAALTKAGKDVLYDDTDDRAGTKFATADLIGVPFQIIAGPRAVANGEVEVKDRKTGARETMTIEAAINRFVA</sequence>
<comment type="function">
    <text evidence="1">Catalyzes the attachment of proline to tRNA(Pro) in a two-step reaction: proline is first activated by ATP to form Pro-AMP and then transferred to the acceptor end of tRNA(Pro).</text>
</comment>
<comment type="catalytic activity">
    <reaction evidence="1">
        <text>tRNA(Pro) + L-proline + ATP = L-prolyl-tRNA(Pro) + AMP + diphosphate</text>
        <dbReference type="Rhea" id="RHEA:14305"/>
        <dbReference type="Rhea" id="RHEA-COMP:9700"/>
        <dbReference type="Rhea" id="RHEA-COMP:9702"/>
        <dbReference type="ChEBI" id="CHEBI:30616"/>
        <dbReference type="ChEBI" id="CHEBI:33019"/>
        <dbReference type="ChEBI" id="CHEBI:60039"/>
        <dbReference type="ChEBI" id="CHEBI:78442"/>
        <dbReference type="ChEBI" id="CHEBI:78532"/>
        <dbReference type="ChEBI" id="CHEBI:456215"/>
        <dbReference type="EC" id="6.1.1.15"/>
    </reaction>
</comment>
<comment type="subunit">
    <text evidence="1">Homodimer.</text>
</comment>
<comment type="subcellular location">
    <subcellularLocation>
        <location evidence="1">Cytoplasm</location>
    </subcellularLocation>
</comment>
<comment type="similarity">
    <text evidence="1">Belongs to the class-II aminoacyl-tRNA synthetase family. ProS type 2 subfamily.</text>
</comment>
<gene>
    <name evidence="1" type="primary">proS</name>
    <name type="ordered locus">Rleg2_1279</name>
</gene>
<keyword id="KW-0030">Aminoacyl-tRNA synthetase</keyword>
<keyword id="KW-0067">ATP-binding</keyword>
<keyword id="KW-0963">Cytoplasm</keyword>
<keyword id="KW-0436">Ligase</keyword>
<keyword id="KW-0547">Nucleotide-binding</keyword>
<keyword id="KW-0648">Protein biosynthesis</keyword>
<keyword id="KW-1185">Reference proteome</keyword>